<name>RL34_ECOSM</name>
<dbReference type="EMBL" id="CP000970">
    <property type="protein sequence ID" value="ACB17382.1"/>
    <property type="molecule type" value="Genomic_DNA"/>
</dbReference>
<dbReference type="RefSeq" id="WP_000831330.1">
    <property type="nucleotide sequence ID" value="NC_010498.1"/>
</dbReference>
<dbReference type="SMR" id="B1LL30"/>
<dbReference type="GeneID" id="98190980"/>
<dbReference type="KEGG" id="ecm:EcSMS35_4070"/>
<dbReference type="HOGENOM" id="CLU_129938_2_1_6"/>
<dbReference type="Proteomes" id="UP000007011">
    <property type="component" value="Chromosome"/>
</dbReference>
<dbReference type="GO" id="GO:1990904">
    <property type="term" value="C:ribonucleoprotein complex"/>
    <property type="evidence" value="ECO:0007669"/>
    <property type="project" value="UniProtKB-KW"/>
</dbReference>
<dbReference type="GO" id="GO:0005840">
    <property type="term" value="C:ribosome"/>
    <property type="evidence" value="ECO:0007669"/>
    <property type="project" value="UniProtKB-KW"/>
</dbReference>
<dbReference type="GO" id="GO:0003735">
    <property type="term" value="F:structural constituent of ribosome"/>
    <property type="evidence" value="ECO:0007669"/>
    <property type="project" value="InterPro"/>
</dbReference>
<dbReference type="GO" id="GO:0006412">
    <property type="term" value="P:translation"/>
    <property type="evidence" value="ECO:0007669"/>
    <property type="project" value="UniProtKB-UniRule"/>
</dbReference>
<dbReference type="FunFam" id="1.10.287.3980:FF:000001">
    <property type="entry name" value="Mitochondrial ribosomal protein L34"/>
    <property type="match status" value="1"/>
</dbReference>
<dbReference type="Gene3D" id="1.10.287.3980">
    <property type="match status" value="1"/>
</dbReference>
<dbReference type="HAMAP" id="MF_00391">
    <property type="entry name" value="Ribosomal_bL34"/>
    <property type="match status" value="1"/>
</dbReference>
<dbReference type="InterPro" id="IPR000271">
    <property type="entry name" value="Ribosomal_bL34"/>
</dbReference>
<dbReference type="InterPro" id="IPR020939">
    <property type="entry name" value="Ribosomal_bL34_CS"/>
</dbReference>
<dbReference type="NCBIfam" id="TIGR01030">
    <property type="entry name" value="rpmH_bact"/>
    <property type="match status" value="1"/>
</dbReference>
<dbReference type="PANTHER" id="PTHR14503:SF4">
    <property type="entry name" value="LARGE RIBOSOMAL SUBUNIT PROTEIN BL34M"/>
    <property type="match status" value="1"/>
</dbReference>
<dbReference type="PANTHER" id="PTHR14503">
    <property type="entry name" value="MITOCHONDRIAL RIBOSOMAL PROTEIN 34 FAMILY MEMBER"/>
    <property type="match status" value="1"/>
</dbReference>
<dbReference type="Pfam" id="PF00468">
    <property type="entry name" value="Ribosomal_L34"/>
    <property type="match status" value="1"/>
</dbReference>
<dbReference type="PROSITE" id="PS00784">
    <property type="entry name" value="RIBOSOMAL_L34"/>
    <property type="match status" value="1"/>
</dbReference>
<evidence type="ECO:0000255" key="1">
    <source>
        <dbReference type="HAMAP-Rule" id="MF_00391"/>
    </source>
</evidence>
<evidence type="ECO:0000305" key="2"/>
<sequence>MKRTFQPSVLKRNRSHGFRARMATKNGRQVLARRRAKGRARLTVSK</sequence>
<comment type="similarity">
    <text evidence="1">Belongs to the bacterial ribosomal protein bL34 family.</text>
</comment>
<organism>
    <name type="scientific">Escherichia coli (strain SMS-3-5 / SECEC)</name>
    <dbReference type="NCBI Taxonomy" id="439855"/>
    <lineage>
        <taxon>Bacteria</taxon>
        <taxon>Pseudomonadati</taxon>
        <taxon>Pseudomonadota</taxon>
        <taxon>Gammaproteobacteria</taxon>
        <taxon>Enterobacterales</taxon>
        <taxon>Enterobacteriaceae</taxon>
        <taxon>Escherichia</taxon>
    </lineage>
</organism>
<feature type="chain" id="PRO_1000196044" description="Large ribosomal subunit protein bL34">
    <location>
        <begin position="1"/>
        <end position="46"/>
    </location>
</feature>
<accession>B1LL30</accession>
<gene>
    <name evidence="1" type="primary">rpmH</name>
    <name type="ordered locus">EcSMS35_4070</name>
</gene>
<keyword id="KW-0687">Ribonucleoprotein</keyword>
<keyword id="KW-0689">Ribosomal protein</keyword>
<protein>
    <recommendedName>
        <fullName evidence="1">Large ribosomal subunit protein bL34</fullName>
    </recommendedName>
    <alternativeName>
        <fullName evidence="2">50S ribosomal protein L34</fullName>
    </alternativeName>
</protein>
<proteinExistence type="inferred from homology"/>
<reference key="1">
    <citation type="journal article" date="2008" name="J. Bacteriol.">
        <title>Insights into the environmental resistance gene pool from the genome sequence of the multidrug-resistant environmental isolate Escherichia coli SMS-3-5.</title>
        <authorList>
            <person name="Fricke W.F."/>
            <person name="Wright M.S."/>
            <person name="Lindell A.H."/>
            <person name="Harkins D.M."/>
            <person name="Baker-Austin C."/>
            <person name="Ravel J."/>
            <person name="Stepanauskas R."/>
        </authorList>
    </citation>
    <scope>NUCLEOTIDE SEQUENCE [LARGE SCALE GENOMIC DNA]</scope>
    <source>
        <strain>SMS-3-5 / SECEC</strain>
    </source>
</reference>